<name>MRAY_SYNR3</name>
<protein>
    <recommendedName>
        <fullName evidence="1">Phospho-N-acetylmuramoyl-pentapeptide-transferase</fullName>
        <ecNumber evidence="1">2.7.8.13</ecNumber>
    </recommendedName>
    <alternativeName>
        <fullName evidence="1">UDP-MurNAc-pentapeptide phosphotransferase</fullName>
    </alternativeName>
</protein>
<proteinExistence type="inferred from homology"/>
<sequence>MTAQQAQRFPGTGLQWSLGLIALILAACLISDGLSGGPQLSLPLLLAGALSWLVCWIGVPRLRALKMGQVIRQEGPQSHQSKSGTPTMGGLLLVPCGVVVGSLVSPGDPRLLPIGLVTLAFMVIGGIDDWRSLTKRHNTGLTPKGKLLLQALAAGLFLLWAGLHGAIPTAIALPWGWLLPIGLLIWPLGLFVFLAESNATNLTDGLDGLAAGVGAIVLVGLSLQLMLRGNGGDPALAGYGAALAGAWLGFLLHNRHPARVFMGDTGSLAMGAALSAIALLSNSLWPLLLMGGLLLAESLSVILQVWVFKATKGADGQGKRLLRMAPLHHHFELGGWSERRVVVSFWGISLLLVALGLVLVP</sequence>
<comment type="function">
    <text evidence="1">Catalyzes the initial step of the lipid cycle reactions in the biosynthesis of the cell wall peptidoglycan: transfers peptidoglycan precursor phospho-MurNAc-pentapeptide from UDP-MurNAc-pentapeptide onto the lipid carrier undecaprenyl phosphate, yielding undecaprenyl-pyrophosphoryl-MurNAc-pentapeptide, known as lipid I.</text>
</comment>
<comment type="catalytic activity">
    <reaction evidence="1">
        <text>UDP-N-acetyl-alpha-D-muramoyl-L-alanyl-gamma-D-glutamyl-meso-2,6-diaminopimeloyl-D-alanyl-D-alanine + di-trans,octa-cis-undecaprenyl phosphate = di-trans,octa-cis-undecaprenyl diphospho-N-acetyl-alpha-D-muramoyl-L-alanyl-D-glutamyl-meso-2,6-diaminopimeloyl-D-alanyl-D-alanine + UMP</text>
        <dbReference type="Rhea" id="RHEA:28386"/>
        <dbReference type="ChEBI" id="CHEBI:57865"/>
        <dbReference type="ChEBI" id="CHEBI:60392"/>
        <dbReference type="ChEBI" id="CHEBI:61386"/>
        <dbReference type="ChEBI" id="CHEBI:61387"/>
        <dbReference type="EC" id="2.7.8.13"/>
    </reaction>
</comment>
<comment type="cofactor">
    <cofactor evidence="1">
        <name>Mg(2+)</name>
        <dbReference type="ChEBI" id="CHEBI:18420"/>
    </cofactor>
</comment>
<comment type="pathway">
    <text evidence="1">Cell wall biogenesis; peptidoglycan biosynthesis.</text>
</comment>
<comment type="subcellular location">
    <subcellularLocation>
        <location evidence="1">Cell inner membrane</location>
        <topology evidence="1">Multi-pass membrane protein</topology>
    </subcellularLocation>
</comment>
<comment type="similarity">
    <text evidence="1">Belongs to the glycosyltransferase 4 family. MraY subfamily.</text>
</comment>
<reference key="1">
    <citation type="submission" date="2006-05" db="EMBL/GenBank/DDBJ databases">
        <authorList>
            <consortium name="Genoscope"/>
        </authorList>
    </citation>
    <scope>NUCLEOTIDE SEQUENCE [LARGE SCALE GENOMIC DNA]</scope>
    <source>
        <strain>RCC307</strain>
    </source>
</reference>
<evidence type="ECO:0000255" key="1">
    <source>
        <dbReference type="HAMAP-Rule" id="MF_00038"/>
    </source>
</evidence>
<feature type="chain" id="PRO_0000332549" description="Phospho-N-acetylmuramoyl-pentapeptide-transferase">
    <location>
        <begin position="1"/>
        <end position="361"/>
    </location>
</feature>
<feature type="transmembrane region" description="Helical" evidence="1">
    <location>
        <begin position="10"/>
        <end position="30"/>
    </location>
</feature>
<feature type="transmembrane region" description="Helical" evidence="1">
    <location>
        <begin position="40"/>
        <end position="60"/>
    </location>
</feature>
<feature type="transmembrane region" description="Helical" evidence="1">
    <location>
        <begin position="84"/>
        <end position="104"/>
    </location>
</feature>
<feature type="transmembrane region" description="Helical" evidence="1">
    <location>
        <begin position="107"/>
        <end position="127"/>
    </location>
</feature>
<feature type="transmembrane region" description="Helical" evidence="1">
    <location>
        <begin position="147"/>
        <end position="167"/>
    </location>
</feature>
<feature type="transmembrane region" description="Helical" evidence="1">
    <location>
        <begin position="175"/>
        <end position="195"/>
    </location>
</feature>
<feature type="transmembrane region" description="Helical" evidence="1">
    <location>
        <begin position="206"/>
        <end position="226"/>
    </location>
</feature>
<feature type="transmembrane region" description="Helical" evidence="1">
    <location>
        <begin position="232"/>
        <end position="252"/>
    </location>
</feature>
<feature type="transmembrane region" description="Helical" evidence="1">
    <location>
        <begin position="260"/>
        <end position="280"/>
    </location>
</feature>
<feature type="transmembrane region" description="Helical" evidence="1">
    <location>
        <begin position="288"/>
        <end position="308"/>
    </location>
</feature>
<feature type="transmembrane region" description="Helical" evidence="1">
    <location>
        <begin position="341"/>
        <end position="361"/>
    </location>
</feature>
<gene>
    <name evidence="1" type="primary">mraY</name>
    <name type="ordered locus">SynRCC307_2525</name>
</gene>
<organism>
    <name type="scientific">Synechococcus sp. (strain RCC307)</name>
    <dbReference type="NCBI Taxonomy" id="316278"/>
    <lineage>
        <taxon>Bacteria</taxon>
        <taxon>Bacillati</taxon>
        <taxon>Cyanobacteriota</taxon>
        <taxon>Cyanophyceae</taxon>
        <taxon>Synechococcales</taxon>
        <taxon>Synechococcaceae</taxon>
        <taxon>Synechococcus</taxon>
    </lineage>
</organism>
<keyword id="KW-0131">Cell cycle</keyword>
<keyword id="KW-0132">Cell division</keyword>
<keyword id="KW-0997">Cell inner membrane</keyword>
<keyword id="KW-1003">Cell membrane</keyword>
<keyword id="KW-0133">Cell shape</keyword>
<keyword id="KW-0961">Cell wall biogenesis/degradation</keyword>
<keyword id="KW-0460">Magnesium</keyword>
<keyword id="KW-0472">Membrane</keyword>
<keyword id="KW-0479">Metal-binding</keyword>
<keyword id="KW-0573">Peptidoglycan synthesis</keyword>
<keyword id="KW-1185">Reference proteome</keyword>
<keyword id="KW-0808">Transferase</keyword>
<keyword id="KW-0812">Transmembrane</keyword>
<keyword id="KW-1133">Transmembrane helix</keyword>
<accession>A5GX19</accession>
<dbReference type="EC" id="2.7.8.13" evidence="1"/>
<dbReference type="EMBL" id="CT978603">
    <property type="protein sequence ID" value="CAK29428.1"/>
    <property type="molecule type" value="Genomic_DNA"/>
</dbReference>
<dbReference type="SMR" id="A5GX19"/>
<dbReference type="STRING" id="316278.SynRCC307_2525"/>
<dbReference type="KEGG" id="syr:SynRCC307_2525"/>
<dbReference type="eggNOG" id="COG0472">
    <property type="taxonomic scope" value="Bacteria"/>
</dbReference>
<dbReference type="HOGENOM" id="CLU_023982_0_2_3"/>
<dbReference type="OrthoDB" id="9805475at2"/>
<dbReference type="UniPathway" id="UPA00219"/>
<dbReference type="Proteomes" id="UP000001115">
    <property type="component" value="Chromosome"/>
</dbReference>
<dbReference type="GO" id="GO:0005886">
    <property type="term" value="C:plasma membrane"/>
    <property type="evidence" value="ECO:0007669"/>
    <property type="project" value="UniProtKB-SubCell"/>
</dbReference>
<dbReference type="GO" id="GO:0046872">
    <property type="term" value="F:metal ion binding"/>
    <property type="evidence" value="ECO:0007669"/>
    <property type="project" value="UniProtKB-KW"/>
</dbReference>
<dbReference type="GO" id="GO:0008963">
    <property type="term" value="F:phospho-N-acetylmuramoyl-pentapeptide-transferase activity"/>
    <property type="evidence" value="ECO:0007669"/>
    <property type="project" value="UniProtKB-UniRule"/>
</dbReference>
<dbReference type="GO" id="GO:0051992">
    <property type="term" value="F:UDP-N-acetylmuramoyl-L-alanyl-D-glutamyl-meso-2,6-diaminopimelyl-D-alanyl-D-alanine:undecaprenyl-phosphate transferase activity"/>
    <property type="evidence" value="ECO:0007669"/>
    <property type="project" value="RHEA"/>
</dbReference>
<dbReference type="GO" id="GO:0051301">
    <property type="term" value="P:cell division"/>
    <property type="evidence" value="ECO:0007669"/>
    <property type="project" value="UniProtKB-KW"/>
</dbReference>
<dbReference type="GO" id="GO:0071555">
    <property type="term" value="P:cell wall organization"/>
    <property type="evidence" value="ECO:0007669"/>
    <property type="project" value="UniProtKB-KW"/>
</dbReference>
<dbReference type="GO" id="GO:0009252">
    <property type="term" value="P:peptidoglycan biosynthetic process"/>
    <property type="evidence" value="ECO:0007669"/>
    <property type="project" value="UniProtKB-UniRule"/>
</dbReference>
<dbReference type="GO" id="GO:0008360">
    <property type="term" value="P:regulation of cell shape"/>
    <property type="evidence" value="ECO:0007669"/>
    <property type="project" value="UniProtKB-KW"/>
</dbReference>
<dbReference type="CDD" id="cd06852">
    <property type="entry name" value="GT_MraY"/>
    <property type="match status" value="1"/>
</dbReference>
<dbReference type="HAMAP" id="MF_00038">
    <property type="entry name" value="MraY"/>
    <property type="match status" value="1"/>
</dbReference>
<dbReference type="InterPro" id="IPR000715">
    <property type="entry name" value="Glycosyl_transferase_4"/>
</dbReference>
<dbReference type="InterPro" id="IPR003524">
    <property type="entry name" value="PNAcMuramoyl-5peptid_Trfase"/>
</dbReference>
<dbReference type="InterPro" id="IPR018480">
    <property type="entry name" value="PNAcMuramoyl-5peptid_Trfase_CS"/>
</dbReference>
<dbReference type="NCBIfam" id="TIGR00445">
    <property type="entry name" value="mraY"/>
    <property type="match status" value="1"/>
</dbReference>
<dbReference type="PANTHER" id="PTHR22926">
    <property type="entry name" value="PHOSPHO-N-ACETYLMURAMOYL-PENTAPEPTIDE-TRANSFERASE"/>
    <property type="match status" value="1"/>
</dbReference>
<dbReference type="PANTHER" id="PTHR22926:SF5">
    <property type="entry name" value="PHOSPHO-N-ACETYLMURAMOYL-PENTAPEPTIDE-TRANSFERASE HOMOLOG"/>
    <property type="match status" value="1"/>
</dbReference>
<dbReference type="Pfam" id="PF00953">
    <property type="entry name" value="Glycos_transf_4"/>
    <property type="match status" value="1"/>
</dbReference>
<dbReference type="Pfam" id="PF10555">
    <property type="entry name" value="MraY_sig1"/>
    <property type="match status" value="1"/>
</dbReference>
<dbReference type="PROSITE" id="PS01347">
    <property type="entry name" value="MRAY_1"/>
    <property type="match status" value="1"/>
</dbReference>
<dbReference type="PROSITE" id="PS01348">
    <property type="entry name" value="MRAY_2"/>
    <property type="match status" value="1"/>
</dbReference>